<protein>
    <recommendedName>
        <fullName evidence="6">Schlafen family member 1</fullName>
        <shortName evidence="5">Schlafen-1</shortName>
    </recommendedName>
</protein>
<gene>
    <name evidence="5 7" type="primary">Slfn1</name>
</gene>
<reference key="1">
    <citation type="journal article" date="1998" name="Immunity">
        <title>Schlafen, a new family of growth regulatory genes that affect thymocyte development.</title>
        <authorList>
            <person name="Schwarz D.A."/>
            <person name="Katayama C.D."/>
            <person name="Hedrick S.M."/>
        </authorList>
    </citation>
    <scope>NUCLEOTIDE SEQUENCE [MRNA]</scope>
    <scope>FUNCTION</scope>
    <scope>DISRUPTION PHENOTYPE</scope>
    <scope>TISSUE SPECIFICITY</scope>
</reference>
<reference key="2">
    <citation type="journal article" date="2009" name="PLoS Biol.">
        <title>Lineage-specific biology revealed by a finished genome assembly of the mouse.</title>
        <authorList>
            <person name="Church D.M."/>
            <person name="Goodstadt L."/>
            <person name="Hillier L.W."/>
            <person name="Zody M.C."/>
            <person name="Goldstein S."/>
            <person name="She X."/>
            <person name="Bult C.J."/>
            <person name="Agarwala R."/>
            <person name="Cherry J.L."/>
            <person name="DiCuccio M."/>
            <person name="Hlavina W."/>
            <person name="Kapustin Y."/>
            <person name="Meric P."/>
            <person name="Maglott D."/>
            <person name="Birtle Z."/>
            <person name="Marques A.C."/>
            <person name="Graves T."/>
            <person name="Zhou S."/>
            <person name="Teague B."/>
            <person name="Potamousis K."/>
            <person name="Churas C."/>
            <person name="Place M."/>
            <person name="Herschleb J."/>
            <person name="Runnheim R."/>
            <person name="Forrest D."/>
            <person name="Amos-Landgraf J."/>
            <person name="Schwartz D.C."/>
            <person name="Cheng Z."/>
            <person name="Lindblad-Toh K."/>
            <person name="Eichler E.E."/>
            <person name="Ponting C.P."/>
        </authorList>
    </citation>
    <scope>NUCLEOTIDE SEQUENCE [LARGE SCALE GENOMIC DNA]</scope>
    <source>
        <strain>C57BL/6J</strain>
    </source>
</reference>
<reference key="3">
    <citation type="submission" date="2016-09" db="EMBL/GenBank/DDBJ databases">
        <title>Multiple mouse reference genomes defines strain specific haplotypes and novel coding sequences.</title>
        <authorList>
            <person name="Lilue J."/>
        </authorList>
    </citation>
    <scope>NUCLEOTIDE SEQUENCE [LARGE SCALE GENOMIC DNA]</scope>
    <source>
        <strain>PWK/PhJ</strain>
    </source>
</reference>
<reference key="4">
    <citation type="journal article" date="2004" name="Genome Res.">
        <title>The status, quality, and expansion of the NIH full-length cDNA project: the Mammalian Gene Collection (MGC).</title>
        <authorList>
            <consortium name="The MGC Project Team"/>
        </authorList>
    </citation>
    <scope>NUCLEOTIDE SEQUENCE [LARGE SCALE MRNA]</scope>
    <source>
        <strain>C57BL/6NCr</strain>
        <tissue>Hematopoietic stem cell</tissue>
    </source>
</reference>
<reference key="5">
    <citation type="journal article" date="2005" name="J. Biol. Chem.">
        <title>Schlafen-1 causes a cell cycle arrest by inhibiting induction of cyclin D1.</title>
        <authorList>
            <person name="Brady G."/>
            <person name="Boggan L."/>
            <person name="Bowie A."/>
            <person name="O'Neill L.A."/>
        </authorList>
    </citation>
    <scope>FUNCTION</scope>
</reference>
<reference key="6">
    <citation type="journal article" date="2008" name="Biochem. J.">
        <title>The Hsp40 family chaperone protein DnaJB6 enhances Schlafen1 nuclear localization which is critical for promotion of cell-cycle arrest in T-cells.</title>
        <authorList>
            <person name="Zhang Y."/>
            <person name="Yang Z."/>
            <person name="Cao Y."/>
            <person name="Zhang S."/>
            <person name="Li H."/>
            <person name="Huang Y."/>
            <person name="Ding Y.Q."/>
            <person name="Liu X."/>
        </authorList>
    </citation>
    <scope>FUNCTION</scope>
    <scope>SUBCELLULAR LOCATION</scope>
    <scope>INTERACTION WITH DNAJB6</scope>
</reference>
<name>SLFN1_MOUSE</name>
<proteinExistence type="evidence at protein level"/>
<dbReference type="EMBL" id="AF099972">
    <property type="protein sequence ID" value="AAC83825.1"/>
    <property type="molecule type" value="mRNA"/>
</dbReference>
<dbReference type="EMBL" id="LT629151">
    <property type="protein sequence ID" value="SDA08584.1"/>
    <property type="molecule type" value="Genomic_DNA"/>
</dbReference>
<dbReference type="EMBL" id="BC052869">
    <property type="protein sequence ID" value="AAH52869.1"/>
    <property type="molecule type" value="mRNA"/>
</dbReference>
<dbReference type="CCDS" id="CCDS25157.1"/>
<dbReference type="RefSeq" id="NP_035537.1">
    <property type="nucleotide sequence ID" value="NM_011407.2"/>
</dbReference>
<dbReference type="SMR" id="Q9Z0I7"/>
<dbReference type="FunCoup" id="Q9Z0I7">
    <property type="interactions" value="8"/>
</dbReference>
<dbReference type="STRING" id="10090.ENSMUSP00000047782"/>
<dbReference type="GlyGen" id="Q9Z0I7">
    <property type="glycosylation" value="2 sites, 1 O-linked glycan (2 sites)"/>
</dbReference>
<dbReference type="iPTMnet" id="Q9Z0I7"/>
<dbReference type="PhosphoSitePlus" id="Q9Z0I7"/>
<dbReference type="PaxDb" id="10090-ENSMUSP00000047782"/>
<dbReference type="ProteomicsDB" id="331039"/>
<dbReference type="DNASU" id="20555"/>
<dbReference type="Ensembl" id="ENSMUST00000037994.8">
    <property type="protein sequence ID" value="ENSMUSP00000047782.8"/>
    <property type="gene ID" value="ENSMUSG00000078763.3"/>
</dbReference>
<dbReference type="GeneID" id="20555"/>
<dbReference type="KEGG" id="mmu:20555"/>
<dbReference type="UCSC" id="uc007koi.1">
    <property type="organism name" value="mouse"/>
</dbReference>
<dbReference type="AGR" id="MGI:1313259"/>
<dbReference type="CTD" id="20555"/>
<dbReference type="MGI" id="MGI:1313259">
    <property type="gene designation" value="Slfn1"/>
</dbReference>
<dbReference type="VEuPathDB" id="HostDB:ENSMUSG00000078763"/>
<dbReference type="eggNOG" id="ENOG502RU3F">
    <property type="taxonomic scope" value="Eukaryota"/>
</dbReference>
<dbReference type="GeneTree" id="ENSGT00410000025651"/>
<dbReference type="HOGENOM" id="CLU_676069_0_0_1"/>
<dbReference type="InParanoid" id="Q9Z0I7"/>
<dbReference type="OMA" id="FICVEKS"/>
<dbReference type="OrthoDB" id="6052143at2759"/>
<dbReference type="BioGRID-ORCS" id="20555">
    <property type="hits" value="3 hits in 76 CRISPR screens"/>
</dbReference>
<dbReference type="PRO" id="PR:Q9Z0I7"/>
<dbReference type="Proteomes" id="UP000000589">
    <property type="component" value="Chromosome 11"/>
</dbReference>
<dbReference type="RNAct" id="Q9Z0I7">
    <property type="molecule type" value="protein"/>
</dbReference>
<dbReference type="Bgee" id="ENSMUSG00000078763">
    <property type="expression patterns" value="Expressed in granulocyte and 24 other cell types or tissues"/>
</dbReference>
<dbReference type="GO" id="GO:0005737">
    <property type="term" value="C:cytoplasm"/>
    <property type="evidence" value="ECO:0000314"/>
    <property type="project" value="MGI"/>
</dbReference>
<dbReference type="GO" id="GO:0005634">
    <property type="term" value="C:nucleus"/>
    <property type="evidence" value="ECO:0000314"/>
    <property type="project" value="MGI"/>
</dbReference>
<dbReference type="GO" id="GO:0002250">
    <property type="term" value="P:adaptive immune response"/>
    <property type="evidence" value="ECO:0007669"/>
    <property type="project" value="UniProtKB-KW"/>
</dbReference>
<dbReference type="GO" id="GO:0008285">
    <property type="term" value="P:negative regulation of cell population proliferation"/>
    <property type="evidence" value="ECO:0000314"/>
    <property type="project" value="MGI"/>
</dbReference>
<dbReference type="GO" id="GO:2000134">
    <property type="term" value="P:negative regulation of G1/S transition of mitotic cell cycle"/>
    <property type="evidence" value="ECO:0000314"/>
    <property type="project" value="MGI"/>
</dbReference>
<dbReference type="GO" id="GO:0042130">
    <property type="term" value="P:negative regulation of T cell proliferation"/>
    <property type="evidence" value="ECO:0000314"/>
    <property type="project" value="MGI"/>
</dbReference>
<dbReference type="GO" id="GO:0000122">
    <property type="term" value="P:negative regulation of transcription by RNA polymerase II"/>
    <property type="evidence" value="ECO:0000314"/>
    <property type="project" value="MGI"/>
</dbReference>
<dbReference type="GO" id="GO:0051726">
    <property type="term" value="P:regulation of cell cycle"/>
    <property type="evidence" value="ECO:0000314"/>
    <property type="project" value="MGI"/>
</dbReference>
<dbReference type="GO" id="GO:0042098">
    <property type="term" value="P:T cell proliferation"/>
    <property type="evidence" value="ECO:0000314"/>
    <property type="project" value="MGI"/>
</dbReference>
<dbReference type="FunFam" id="3.30.950.30:FF:000001">
    <property type="entry name" value="Schlafen family member 14"/>
    <property type="match status" value="1"/>
</dbReference>
<dbReference type="Gene3D" id="3.30.950.30">
    <property type="entry name" value="Schlafen, AAA domain"/>
    <property type="match status" value="1"/>
</dbReference>
<dbReference type="InterPro" id="IPR031450">
    <property type="entry name" value="Poxin-SLFN/SLFN_N"/>
</dbReference>
<dbReference type="InterPro" id="IPR029684">
    <property type="entry name" value="Schlafen"/>
</dbReference>
<dbReference type="InterPro" id="IPR007421">
    <property type="entry name" value="Schlafen_AlbA_2_dom"/>
</dbReference>
<dbReference type="InterPro" id="IPR038461">
    <property type="entry name" value="Schlafen_AlbA_2_dom_sf"/>
</dbReference>
<dbReference type="PANTHER" id="PTHR12155:SF2">
    <property type="entry name" value="RIBONUCLEASE SLFN12"/>
    <property type="match status" value="1"/>
</dbReference>
<dbReference type="PANTHER" id="PTHR12155">
    <property type="entry name" value="SCHLAFEN"/>
    <property type="match status" value="1"/>
</dbReference>
<dbReference type="Pfam" id="PF17057">
    <property type="entry name" value="B3R"/>
    <property type="match status" value="1"/>
</dbReference>
<dbReference type="Pfam" id="PF04326">
    <property type="entry name" value="SLFN_AlbA_2"/>
    <property type="match status" value="1"/>
</dbReference>
<comment type="function">
    <text evidence="2 3 4">Protein expressed in resting T-cells, which is required for maintaining T-cells in the quiescent state (PubMed:15946944, PubMed:18373498, PubMed:9846487). Acts by promoting cell-cycle arrest of T-cells through inhibiting the expression of cyclin-D1 (CCND1) (PubMed:15946944).</text>
</comment>
<comment type="subunit">
    <text evidence="3">Interacts with DNAJB6; promoting nuclear translocation and ability to promote cell-cycle arrest.</text>
</comment>
<comment type="subcellular location">
    <subcellularLocation>
        <location evidence="3">Cytoplasm</location>
    </subcellularLocation>
    <subcellularLocation>
        <location evidence="3">Nucleus</location>
    </subcellularLocation>
    <text evidence="3">Translocates into the nucleus following interaction with DNAJB6.</text>
</comment>
<comment type="tissue specificity">
    <text evidence="4">Mainly expressed in the thymus, lymph node and spleen (PubMed:9846487). Specifically expressed in T-lineage cells, but not in B-cells (PubMed:9846487). Strongly up-regulated during the differentiation from CD4(+)CD8(+) double-positive (DP) to CD4(+) or CD8(+) single-positive (SP) thymocytes (PubMed:9846487). Highly expressed in quiescent single-positive thymocytes and T-cells (PubMed:9846487). The expression substantially decreases after TCR (T-cell receptor)-mediated activation (PubMed:9846487).</text>
</comment>
<comment type="disruption phenotype">
    <text evidence="4">No visible phenotype.</text>
</comment>
<comment type="similarity">
    <text evidence="6">Belongs to the Schlafen family.</text>
</comment>
<evidence type="ECO:0000256" key="1">
    <source>
        <dbReference type="SAM" id="MobiDB-lite"/>
    </source>
</evidence>
<evidence type="ECO:0000269" key="2">
    <source>
    </source>
</evidence>
<evidence type="ECO:0000269" key="3">
    <source>
    </source>
</evidence>
<evidence type="ECO:0000269" key="4">
    <source>
    </source>
</evidence>
<evidence type="ECO:0000303" key="5">
    <source>
    </source>
</evidence>
<evidence type="ECO:0000305" key="6"/>
<evidence type="ECO:0000312" key="7">
    <source>
        <dbReference type="MGI" id="MGI:1313259"/>
    </source>
</evidence>
<feature type="chain" id="PRO_0000457108" description="Schlafen family member 1">
    <location>
        <begin position="1"/>
        <end position="337"/>
    </location>
</feature>
<feature type="region of interest" description="Disordered" evidence="1">
    <location>
        <begin position="147"/>
        <end position="166"/>
    </location>
</feature>
<feature type="compositionally biased region" description="Basic and acidic residues" evidence="1">
    <location>
        <begin position="156"/>
        <end position="166"/>
    </location>
</feature>
<organism>
    <name type="scientific">Mus musculus</name>
    <name type="common">Mouse</name>
    <dbReference type="NCBI Taxonomy" id="10090"/>
    <lineage>
        <taxon>Eukaryota</taxon>
        <taxon>Metazoa</taxon>
        <taxon>Chordata</taxon>
        <taxon>Craniata</taxon>
        <taxon>Vertebrata</taxon>
        <taxon>Euteleostomi</taxon>
        <taxon>Mammalia</taxon>
        <taxon>Eutheria</taxon>
        <taxon>Euarchontoglires</taxon>
        <taxon>Glires</taxon>
        <taxon>Rodentia</taxon>
        <taxon>Myomorpha</taxon>
        <taxon>Muroidea</taxon>
        <taxon>Muridae</taxon>
        <taxon>Murinae</taxon>
        <taxon>Mus</taxon>
        <taxon>Mus</taxon>
    </lineage>
</organism>
<keyword id="KW-1064">Adaptive immunity</keyword>
<keyword id="KW-0963">Cytoplasm</keyword>
<keyword id="KW-0391">Immunity</keyword>
<keyword id="KW-0539">Nucleus</keyword>
<keyword id="KW-1185">Reference proteome</keyword>
<accession>Q9Z0I7</accession>
<sequence>MNITDEGTPVLILNAGGITLGTESRKTMENHDRVEENRNITKALCALINSGEGKVKAHIKNPDYILSKHGIGEDLETSFKNILPSRPLDFKQYQSYFFICVEKSQSPDVSVGKPATIATNLYMRNGASSVEMNLDAAQKFLDNIKVAGGRSPSARPSDRPGDDTQEEGHIQELAAAFFKQSKLTKKENFLFSESKNVEYKSFETKKLLQRVKEILPRTVSAFANTDGGYLFIGLDEKKQEIVGFEAKNCQPKCLESEIEKCIQQLPVTHFCEEREKIKYKCKFIEVHDSGVVCKYVCALRVERFCCAVFAAEPESWHMKDGGVKRFTIEEWIKLLMS</sequence>